<proteinExistence type="evidence at transcript level"/>
<accession>P32603</accession>
<accession>D6W2P6</accession>
<dbReference type="EC" id="3.2.1.58"/>
<dbReference type="EMBL" id="S52935">
    <property type="protein sequence ID" value="AAB24895.1"/>
    <property type="molecule type" value="Genomic_DNA"/>
</dbReference>
<dbReference type="EMBL" id="X59259">
    <property type="protein sequence ID" value="CAA41952.1"/>
    <property type="molecule type" value="Genomic_DNA"/>
</dbReference>
<dbReference type="EMBL" id="Z75098">
    <property type="protein sequence ID" value="CAA99399.1"/>
    <property type="molecule type" value="Genomic_DNA"/>
</dbReference>
<dbReference type="EMBL" id="AY723868">
    <property type="protein sequence ID" value="AAU09785.1"/>
    <property type="molecule type" value="Genomic_DNA"/>
</dbReference>
<dbReference type="EMBL" id="BK006948">
    <property type="protein sequence ID" value="DAA10962.1"/>
    <property type="molecule type" value="Genomic_DNA"/>
</dbReference>
<dbReference type="PIR" id="A40639">
    <property type="entry name" value="A40639"/>
</dbReference>
<dbReference type="RefSeq" id="NP_014833.3">
    <property type="nucleotide sequence ID" value="NM_001183609.3"/>
</dbReference>
<dbReference type="SMR" id="P32603"/>
<dbReference type="BioGRID" id="34585">
    <property type="interactions" value="42"/>
</dbReference>
<dbReference type="DIP" id="DIP-3910N"/>
<dbReference type="FunCoup" id="P32603">
    <property type="interactions" value="81"/>
</dbReference>
<dbReference type="STRING" id="4932.YOR190W"/>
<dbReference type="CAZy" id="GH5">
    <property type="family name" value="Glycoside Hydrolase Family 5"/>
</dbReference>
<dbReference type="GlyCosmos" id="P32603">
    <property type="glycosylation" value="1 site, No reported glycans"/>
</dbReference>
<dbReference type="GlyGen" id="P32603">
    <property type="glycosylation" value="1 site"/>
</dbReference>
<dbReference type="PaxDb" id="4932-YOR190W"/>
<dbReference type="PeptideAtlas" id="P32603"/>
<dbReference type="EnsemblFungi" id="YOR190W_mRNA">
    <property type="protein sequence ID" value="YOR190W"/>
    <property type="gene ID" value="YOR190W"/>
</dbReference>
<dbReference type="GeneID" id="854362"/>
<dbReference type="KEGG" id="sce:YOR190W"/>
<dbReference type="AGR" id="SGD:S000005716"/>
<dbReference type="SGD" id="S000005716">
    <property type="gene designation" value="SPR1"/>
</dbReference>
<dbReference type="VEuPathDB" id="FungiDB:YOR190W"/>
<dbReference type="eggNOG" id="ENOG502QPYU">
    <property type="taxonomic scope" value="Eukaryota"/>
</dbReference>
<dbReference type="GeneTree" id="ENSGT00940000176313"/>
<dbReference type="HOGENOM" id="CLU_004624_0_1_1"/>
<dbReference type="InParanoid" id="P32603"/>
<dbReference type="OMA" id="GWDMQDL"/>
<dbReference type="OrthoDB" id="62120at2759"/>
<dbReference type="BioCyc" id="YEAST:YOR190W-MONOMER"/>
<dbReference type="BioGRID-ORCS" id="854362">
    <property type="hits" value="0 hits in 10 CRISPR screens"/>
</dbReference>
<dbReference type="PRO" id="PR:P32603"/>
<dbReference type="Proteomes" id="UP000002311">
    <property type="component" value="Chromosome XV"/>
</dbReference>
<dbReference type="RNAct" id="P32603">
    <property type="molecule type" value="protein"/>
</dbReference>
<dbReference type="GO" id="GO:0005619">
    <property type="term" value="C:ascospore wall"/>
    <property type="evidence" value="ECO:0000314"/>
    <property type="project" value="SGD"/>
</dbReference>
<dbReference type="GO" id="GO:0005576">
    <property type="term" value="C:extracellular region"/>
    <property type="evidence" value="ECO:0000318"/>
    <property type="project" value="GO_Central"/>
</dbReference>
<dbReference type="GO" id="GO:0009277">
    <property type="term" value="C:fungal-type cell wall"/>
    <property type="evidence" value="ECO:0000315"/>
    <property type="project" value="SGD"/>
</dbReference>
<dbReference type="GO" id="GO:0000324">
    <property type="term" value="C:fungal-type vacuole"/>
    <property type="evidence" value="ECO:0007005"/>
    <property type="project" value="SGD"/>
</dbReference>
<dbReference type="GO" id="GO:0005628">
    <property type="term" value="C:prospore membrane"/>
    <property type="evidence" value="ECO:0007005"/>
    <property type="project" value="SGD"/>
</dbReference>
<dbReference type="GO" id="GO:0004338">
    <property type="term" value="F:glucan exo-1,3-beta-glucosidase activity"/>
    <property type="evidence" value="ECO:0000314"/>
    <property type="project" value="SGD"/>
</dbReference>
<dbReference type="GO" id="GO:0030437">
    <property type="term" value="P:ascospore formation"/>
    <property type="evidence" value="ECO:0000315"/>
    <property type="project" value="SGD"/>
</dbReference>
<dbReference type="GO" id="GO:0071555">
    <property type="term" value="P:cell wall organization"/>
    <property type="evidence" value="ECO:0007669"/>
    <property type="project" value="UniProtKB-KW"/>
</dbReference>
<dbReference type="GO" id="GO:0009251">
    <property type="term" value="P:glucan catabolic process"/>
    <property type="evidence" value="ECO:0000318"/>
    <property type="project" value="GO_Central"/>
</dbReference>
<dbReference type="FunFam" id="3.20.20.80:FF:000033">
    <property type="entry name" value="Glucan 1,3-beta-glucosidase A"/>
    <property type="match status" value="1"/>
</dbReference>
<dbReference type="Gene3D" id="3.20.20.80">
    <property type="entry name" value="Glycosidases"/>
    <property type="match status" value="1"/>
</dbReference>
<dbReference type="InterPro" id="IPR001547">
    <property type="entry name" value="Glyco_hydro_5"/>
</dbReference>
<dbReference type="InterPro" id="IPR018087">
    <property type="entry name" value="Glyco_hydro_5_CS"/>
</dbReference>
<dbReference type="InterPro" id="IPR017853">
    <property type="entry name" value="Glycoside_hydrolase_SF"/>
</dbReference>
<dbReference type="InterPro" id="IPR050386">
    <property type="entry name" value="Glycosyl_hydrolase_5"/>
</dbReference>
<dbReference type="PANTHER" id="PTHR31297:SF1">
    <property type="entry name" value="GLUCAN 1,3-BETA-GLUCOSIDASE I_II-RELATED"/>
    <property type="match status" value="1"/>
</dbReference>
<dbReference type="PANTHER" id="PTHR31297">
    <property type="entry name" value="GLUCAN ENDO-1,6-BETA-GLUCOSIDASE B"/>
    <property type="match status" value="1"/>
</dbReference>
<dbReference type="Pfam" id="PF00150">
    <property type="entry name" value="Cellulase"/>
    <property type="match status" value="1"/>
</dbReference>
<dbReference type="SUPFAM" id="SSF51445">
    <property type="entry name" value="(Trans)glycosidases"/>
    <property type="match status" value="1"/>
</dbReference>
<dbReference type="PROSITE" id="PS00659">
    <property type="entry name" value="GLYCOSYL_HYDROL_F5"/>
    <property type="match status" value="1"/>
</dbReference>
<reference key="1">
    <citation type="journal article" date="1993" name="J. Bacteriol.">
        <title>The Saccharomyces cerevisiae SPR1 gene encodes a sporulation-specific exo-1,3-beta-glucanase which contributes to ascospore thermoresistance.</title>
        <authorList>
            <person name="Muthukumar G."/>
            <person name="Suhng S.-H."/>
            <person name="Magee P.T."/>
            <person name="Jewell R.D."/>
            <person name="Primerano D.A."/>
        </authorList>
    </citation>
    <scope>NUCLEOTIDE SEQUENCE [GENOMIC DNA]</scope>
</reference>
<reference key="2">
    <citation type="journal article" date="1993" name="J. Bacteriol.">
        <title>SSG1, a gene encoding a sporulation-specific 1,3-beta-glucanase in Saccharomyces cerevisiae.</title>
        <authorList>
            <person name="San Segundo P."/>
            <person name="Correa J."/>
            <person name="Vazquez de Aldana C.R."/>
            <person name="del Rey F."/>
        </authorList>
    </citation>
    <scope>NUCLEOTIDE SEQUENCE [GENOMIC DNA]</scope>
    <source>
        <strain>S288c / GRF88</strain>
    </source>
</reference>
<reference key="3">
    <citation type="journal article" date="1997" name="Nature">
        <title>The nucleotide sequence of Saccharomyces cerevisiae chromosome XV.</title>
        <authorList>
            <person name="Dujon B."/>
            <person name="Albermann K."/>
            <person name="Aldea M."/>
            <person name="Alexandraki D."/>
            <person name="Ansorge W."/>
            <person name="Arino J."/>
            <person name="Benes V."/>
            <person name="Bohn C."/>
            <person name="Bolotin-Fukuhara M."/>
            <person name="Bordonne R."/>
            <person name="Boyer J."/>
            <person name="Camasses A."/>
            <person name="Casamayor A."/>
            <person name="Casas C."/>
            <person name="Cheret G."/>
            <person name="Cziepluch C."/>
            <person name="Daignan-Fornier B."/>
            <person name="Dang V.-D."/>
            <person name="de Haan M."/>
            <person name="Delius H."/>
            <person name="Durand P."/>
            <person name="Fairhead C."/>
            <person name="Feldmann H."/>
            <person name="Gaillon L."/>
            <person name="Galisson F."/>
            <person name="Gamo F.-J."/>
            <person name="Gancedo C."/>
            <person name="Goffeau A."/>
            <person name="Goulding S.E."/>
            <person name="Grivell L.A."/>
            <person name="Habbig B."/>
            <person name="Hand N.J."/>
            <person name="Hani J."/>
            <person name="Hattenhorst U."/>
            <person name="Hebling U."/>
            <person name="Hernando Y."/>
            <person name="Herrero E."/>
            <person name="Heumann K."/>
            <person name="Hiesel R."/>
            <person name="Hilger F."/>
            <person name="Hofmann B."/>
            <person name="Hollenberg C.P."/>
            <person name="Hughes B."/>
            <person name="Jauniaux J.-C."/>
            <person name="Kalogeropoulos A."/>
            <person name="Katsoulou C."/>
            <person name="Kordes E."/>
            <person name="Lafuente M.J."/>
            <person name="Landt O."/>
            <person name="Louis E.J."/>
            <person name="Maarse A.C."/>
            <person name="Madania A."/>
            <person name="Mannhaupt G."/>
            <person name="Marck C."/>
            <person name="Martin R.P."/>
            <person name="Mewes H.-W."/>
            <person name="Michaux G."/>
            <person name="Paces V."/>
            <person name="Parle-McDermott A.G."/>
            <person name="Pearson B.M."/>
            <person name="Perrin A."/>
            <person name="Pettersson B."/>
            <person name="Poch O."/>
            <person name="Pohl T.M."/>
            <person name="Poirey R."/>
            <person name="Portetelle D."/>
            <person name="Pujol A."/>
            <person name="Purnelle B."/>
            <person name="Ramezani Rad M."/>
            <person name="Rechmann S."/>
            <person name="Schwager C."/>
            <person name="Schweizer M."/>
            <person name="Sor F."/>
            <person name="Sterky F."/>
            <person name="Tarassov I.A."/>
            <person name="Teodoru C."/>
            <person name="Tettelin H."/>
            <person name="Thierry A."/>
            <person name="Tobiasch E."/>
            <person name="Tzermia M."/>
            <person name="Uhlen M."/>
            <person name="Unseld M."/>
            <person name="Valens M."/>
            <person name="Vandenbol M."/>
            <person name="Vetter I."/>
            <person name="Vlcek C."/>
            <person name="Voet M."/>
            <person name="Volckaert G."/>
            <person name="Voss H."/>
            <person name="Wambutt R."/>
            <person name="Wedler H."/>
            <person name="Wiemann S."/>
            <person name="Winsor B."/>
            <person name="Wolfe K.H."/>
            <person name="Zollner A."/>
            <person name="Zumstein E."/>
            <person name="Kleine K."/>
        </authorList>
    </citation>
    <scope>NUCLEOTIDE SEQUENCE [LARGE SCALE GENOMIC DNA]</scope>
    <source>
        <strain>ATCC 204508 / S288c</strain>
    </source>
</reference>
<reference key="4">
    <citation type="journal article" date="2014" name="G3 (Bethesda)">
        <title>The reference genome sequence of Saccharomyces cerevisiae: Then and now.</title>
        <authorList>
            <person name="Engel S.R."/>
            <person name="Dietrich F.S."/>
            <person name="Fisk D.G."/>
            <person name="Binkley G."/>
            <person name="Balakrishnan R."/>
            <person name="Costanzo M.C."/>
            <person name="Dwight S.S."/>
            <person name="Hitz B.C."/>
            <person name="Karra K."/>
            <person name="Nash R.S."/>
            <person name="Weng S."/>
            <person name="Wong E.D."/>
            <person name="Lloyd P."/>
            <person name="Skrzypek M.S."/>
            <person name="Miyasato S.R."/>
            <person name="Simison M."/>
            <person name="Cherry J.M."/>
        </authorList>
    </citation>
    <scope>GENOME REANNOTATION</scope>
    <source>
        <strain>ATCC 204508 / S288c</strain>
    </source>
</reference>
<reference key="5">
    <citation type="journal article" date="2007" name="Genome Res.">
        <title>Approaching a complete repository of sequence-verified protein-encoding clones for Saccharomyces cerevisiae.</title>
        <authorList>
            <person name="Hu Y."/>
            <person name="Rolfs A."/>
            <person name="Bhullar B."/>
            <person name="Murthy T.V.S."/>
            <person name="Zhu C."/>
            <person name="Berger M.F."/>
            <person name="Camargo A.A."/>
            <person name="Kelley F."/>
            <person name="McCarron S."/>
            <person name="Jepson D."/>
            <person name="Richardson A."/>
            <person name="Raphael J."/>
            <person name="Moreira D."/>
            <person name="Taycher E."/>
            <person name="Zuo D."/>
            <person name="Mohr S."/>
            <person name="Kane M.F."/>
            <person name="Williamson J."/>
            <person name="Simpson A.J.G."/>
            <person name="Bulyk M.L."/>
            <person name="Harlow E."/>
            <person name="Marsischky G."/>
            <person name="Kolodner R.D."/>
            <person name="LaBaer J."/>
        </authorList>
    </citation>
    <scope>NUCLEOTIDE SEQUENCE [GENOMIC DNA]</scope>
    <source>
        <strain>ATCC 204508 / S288c</strain>
    </source>
</reference>
<comment type="function">
    <text>Probably involved in the processes of spore formation and contributes to ascospore thermoresistance by participating in the morphogenesis of ascospore walls. The enzyme may do this by modifying glucan linkages in the developing ascospore wall, thus strengthening it or lending it plasticity.</text>
</comment>
<comment type="catalytic activity">
    <reaction>
        <text>Successive hydrolysis of beta-D-glucose units from the non-reducing ends of (1-&gt;3)-beta-D-glucans, releasing alpha-glucose.</text>
        <dbReference type="EC" id="3.2.1.58"/>
    </reaction>
</comment>
<comment type="subcellular location">
    <subcellularLocation>
        <location evidence="1">Secreted</location>
    </subcellularLocation>
</comment>
<comment type="developmental stage">
    <text>Late stages of sporulation, during ascospore wall formation. Probably functions before partitioning of nuclei or is distributed to developing ascospores prior to the completion of pro-spore walls.</text>
</comment>
<comment type="similarity">
    <text evidence="3">Belongs to the glycosyl hydrolase 5 (cellulase A) family.</text>
</comment>
<protein>
    <recommendedName>
        <fullName>Sporulation-specific glucan 1,3-beta-glucosidase</fullName>
        <ecNumber>3.2.1.58</ecNumber>
    </recommendedName>
    <alternativeName>
        <fullName>Exo-1,3-beta-glucanase</fullName>
    </alternativeName>
</protein>
<organism>
    <name type="scientific">Saccharomyces cerevisiae (strain ATCC 204508 / S288c)</name>
    <name type="common">Baker's yeast</name>
    <dbReference type="NCBI Taxonomy" id="559292"/>
    <lineage>
        <taxon>Eukaryota</taxon>
        <taxon>Fungi</taxon>
        <taxon>Dikarya</taxon>
        <taxon>Ascomycota</taxon>
        <taxon>Saccharomycotina</taxon>
        <taxon>Saccharomycetes</taxon>
        <taxon>Saccharomycetales</taxon>
        <taxon>Saccharomycetaceae</taxon>
        <taxon>Saccharomyces</taxon>
    </lineage>
</organism>
<keyword id="KW-0961">Cell wall biogenesis/degradation</keyword>
<keyword id="KW-0325">Glycoprotein</keyword>
<keyword id="KW-0326">Glycosidase</keyword>
<keyword id="KW-0378">Hydrolase</keyword>
<keyword id="KW-1185">Reference proteome</keyword>
<keyword id="KW-0964">Secreted</keyword>
<keyword id="KW-0732">Signal</keyword>
<keyword id="KW-0749">Sporulation</keyword>
<feature type="signal peptide" evidence="2">
    <location>
        <begin position="1"/>
        <end position="21"/>
    </location>
</feature>
<feature type="chain" id="PRO_0000007898" description="Sporulation-specific glucan 1,3-beta-glucosidase">
    <location>
        <begin position="22"/>
        <end position="445"/>
    </location>
</feature>
<feature type="active site" description="Proton donor" evidence="1">
    <location>
        <position position="233"/>
    </location>
</feature>
<feature type="active site" description="Nucleophile" evidence="1">
    <location>
        <position position="335"/>
    </location>
</feature>
<feature type="glycosylation site" description="N-linked (GlcNAc...) asparagine" evidence="2">
    <location>
        <position position="201"/>
    </location>
</feature>
<evidence type="ECO:0000250" key="1"/>
<evidence type="ECO:0000255" key="2"/>
<evidence type="ECO:0000305" key="3"/>
<gene>
    <name type="primary">SPR1</name>
    <name type="synonym">SSG1</name>
    <name type="ordered locus">YOR190W</name>
</gene>
<name>SPR1_YEAST</name>
<sequence length="445" mass="51809">MVSFRGLTTLTLLFTKLVNCNPVSTKNRDSIQFIYKEKDSIYSAINNQAINEKIHGVNLGGWLVLEPYITPSLFETFRTNPYNDDGIPVDEYHFCEKLGYEKAKERLYSHWSTFYKEEDFAKIASQGFNLVRIPIGYWAFTTLSHDPYVTAEQEYFLDRAIDWARKYGLKVWIDLHGAAGSQNGFDNSGLRDSYKFLEDENLSATMKALTYILSKYSTDVYLDTVIGIELLNEPLGPVIDMERLKNLLLKPAYDYLRNKINSNQIIVIHDAFQPYHYWDGFLNDEKNEYGVIIDHHHYQVFSQVELTRKMNERIKIACQWGKDAVSEKHWSVAGEFSAALTDCTKWLNGVGLGARYDGSWTKDNEKSHYINTCANNENIALWPEERKQNTRKFIEAQLDAFEMTGGWIMWCYKTENSIEWDVEKLIQLNIFPQPINDRKYPNQCH</sequence>